<dbReference type="EC" id="3.2.1.17"/>
<dbReference type="EMBL" id="L12459">
    <property type="protein sequence ID" value="AAA41551.1"/>
    <property type="molecule type" value="Genomic_DNA"/>
</dbReference>
<dbReference type="PIR" id="A40729">
    <property type="entry name" value="LZRT"/>
</dbReference>
<dbReference type="SMR" id="P00697"/>
<dbReference type="FunCoup" id="P00697">
    <property type="interactions" value="7"/>
</dbReference>
<dbReference type="STRING" id="10116.ENSRNOP00000007747"/>
<dbReference type="BindingDB" id="P00697"/>
<dbReference type="ChEMBL" id="CHEMBL2297"/>
<dbReference type="DrugCentral" id="P00697"/>
<dbReference type="CAZy" id="GH22">
    <property type="family name" value="Glycoside Hydrolase Family 22"/>
</dbReference>
<dbReference type="iPTMnet" id="P00697"/>
<dbReference type="PhosphoSitePlus" id="P00697"/>
<dbReference type="PaxDb" id="10116-ENSRNOP00000007747"/>
<dbReference type="UCSC" id="RGD:3026">
    <property type="organism name" value="rat"/>
</dbReference>
<dbReference type="AGR" id="RGD:3026"/>
<dbReference type="RGD" id="3026">
    <property type="gene designation" value="Lyz"/>
</dbReference>
<dbReference type="eggNOG" id="ENOG502S1S1">
    <property type="taxonomic scope" value="Eukaryota"/>
</dbReference>
<dbReference type="InParanoid" id="P00697"/>
<dbReference type="PhylomeDB" id="P00697"/>
<dbReference type="Reactome" id="R-RNO-6798695">
    <property type="pathway name" value="Neutrophil degranulation"/>
</dbReference>
<dbReference type="Reactome" id="R-RNO-6803157">
    <property type="pathway name" value="Antimicrobial peptides"/>
</dbReference>
<dbReference type="PRO" id="PR:P00697"/>
<dbReference type="Proteomes" id="UP000002494">
    <property type="component" value="Unplaced"/>
</dbReference>
<dbReference type="GO" id="GO:0005788">
    <property type="term" value="C:endoplasmic reticulum lumen"/>
    <property type="evidence" value="ECO:0000314"/>
    <property type="project" value="RGD"/>
</dbReference>
<dbReference type="GO" id="GO:0005615">
    <property type="term" value="C:extracellular space"/>
    <property type="evidence" value="ECO:0000266"/>
    <property type="project" value="RGD"/>
</dbReference>
<dbReference type="GO" id="GO:0000137">
    <property type="term" value="C:Golgi cis cisterna"/>
    <property type="evidence" value="ECO:0000314"/>
    <property type="project" value="RGD"/>
</dbReference>
<dbReference type="GO" id="GO:0005795">
    <property type="term" value="C:Golgi stack"/>
    <property type="evidence" value="ECO:0000314"/>
    <property type="project" value="RGD"/>
</dbReference>
<dbReference type="GO" id="GO:0005902">
    <property type="term" value="C:microvillus"/>
    <property type="evidence" value="ECO:0000314"/>
    <property type="project" value="RGD"/>
</dbReference>
<dbReference type="GO" id="GO:0048237">
    <property type="term" value="C:rough endoplasmic reticulum lumen"/>
    <property type="evidence" value="ECO:0000314"/>
    <property type="project" value="RGD"/>
</dbReference>
<dbReference type="GO" id="GO:0030141">
    <property type="term" value="C:secretory granule"/>
    <property type="evidence" value="ECO:0000314"/>
    <property type="project" value="RGD"/>
</dbReference>
<dbReference type="GO" id="GO:0030140">
    <property type="term" value="C:trans-Golgi network transport vesicle"/>
    <property type="evidence" value="ECO:0000314"/>
    <property type="project" value="RGD"/>
</dbReference>
<dbReference type="GO" id="GO:0016798">
    <property type="term" value="F:hydrolase activity, acting on glycosyl bonds"/>
    <property type="evidence" value="ECO:0000315"/>
    <property type="project" value="RGD"/>
</dbReference>
<dbReference type="GO" id="GO:0042802">
    <property type="term" value="F:identical protein binding"/>
    <property type="evidence" value="ECO:0000266"/>
    <property type="project" value="RGD"/>
</dbReference>
<dbReference type="GO" id="GO:0003796">
    <property type="term" value="F:lysozyme activity"/>
    <property type="evidence" value="ECO:0000314"/>
    <property type="project" value="RGD"/>
</dbReference>
<dbReference type="GO" id="GO:0042742">
    <property type="term" value="P:defense response to bacterium"/>
    <property type="evidence" value="ECO:0000266"/>
    <property type="project" value="RGD"/>
</dbReference>
<dbReference type="GO" id="GO:0050829">
    <property type="term" value="P:defense response to Gram-negative bacterium"/>
    <property type="evidence" value="ECO:0000315"/>
    <property type="project" value="RGD"/>
</dbReference>
<dbReference type="GO" id="GO:0050830">
    <property type="term" value="P:defense response to Gram-positive bacterium"/>
    <property type="evidence" value="ECO:0000315"/>
    <property type="project" value="RGD"/>
</dbReference>
<dbReference type="GO" id="GO:0031640">
    <property type="term" value="P:killing of cells of another organism"/>
    <property type="evidence" value="ECO:0007669"/>
    <property type="project" value="UniProtKB-KW"/>
</dbReference>
<dbReference type="CDD" id="cd16897">
    <property type="entry name" value="LYZ_C"/>
    <property type="match status" value="1"/>
</dbReference>
<dbReference type="FunFam" id="1.10.530.10:FF:000001">
    <property type="entry name" value="Lysozyme C"/>
    <property type="match status" value="1"/>
</dbReference>
<dbReference type="Gene3D" id="1.10.530.10">
    <property type="match status" value="1"/>
</dbReference>
<dbReference type="InterPro" id="IPR001916">
    <property type="entry name" value="Glyco_hydro_22"/>
</dbReference>
<dbReference type="InterPro" id="IPR019799">
    <property type="entry name" value="Glyco_hydro_22_CS"/>
</dbReference>
<dbReference type="InterPro" id="IPR000974">
    <property type="entry name" value="Glyco_hydro_22_lys"/>
</dbReference>
<dbReference type="InterPro" id="IPR023346">
    <property type="entry name" value="Lysozyme-like_dom_sf"/>
</dbReference>
<dbReference type="PANTHER" id="PTHR11407">
    <property type="entry name" value="LYSOZYME C"/>
    <property type="match status" value="1"/>
</dbReference>
<dbReference type="PANTHER" id="PTHR11407:SF28">
    <property type="entry name" value="LYSOZYME C"/>
    <property type="match status" value="1"/>
</dbReference>
<dbReference type="Pfam" id="PF00062">
    <property type="entry name" value="Lys"/>
    <property type="match status" value="1"/>
</dbReference>
<dbReference type="PRINTS" id="PR00137">
    <property type="entry name" value="LYSOZYME"/>
</dbReference>
<dbReference type="PRINTS" id="PR00135">
    <property type="entry name" value="LYZLACT"/>
</dbReference>
<dbReference type="SMART" id="SM00263">
    <property type="entry name" value="LYZ1"/>
    <property type="match status" value="1"/>
</dbReference>
<dbReference type="SUPFAM" id="SSF53955">
    <property type="entry name" value="Lysozyme-like"/>
    <property type="match status" value="1"/>
</dbReference>
<dbReference type="PROSITE" id="PS00128">
    <property type="entry name" value="GLYCOSYL_HYDROL_F22_1"/>
    <property type="match status" value="1"/>
</dbReference>
<dbReference type="PROSITE" id="PS51348">
    <property type="entry name" value="GLYCOSYL_HYDROL_F22_2"/>
    <property type="match status" value="1"/>
</dbReference>
<gene>
    <name type="primary">Lyz1</name>
    <name type="synonym">Lyz</name>
</gene>
<comment type="function">
    <text>Lysozymes have primarily a bacteriolytic function; those in tissues and body fluids are associated with the monocyte-macrophage system and enhance the activity of immunoagents. In the intestine they may also have a digestive function.</text>
</comment>
<comment type="catalytic activity">
    <reaction>
        <text>Hydrolysis of (1-&gt;4)-beta-linkages between N-acetylmuramic acid and N-acetyl-D-glucosamine residues in a peptidoglycan and between N-acetyl-D-glucosamine residues in chitodextrins.</text>
        <dbReference type="EC" id="3.2.1.17"/>
    </reaction>
</comment>
<comment type="subunit">
    <text>Monomer.</text>
</comment>
<comment type="subcellular location">
    <subcellularLocation>
        <location>Secreted</location>
    </subcellularLocation>
</comment>
<comment type="tissue specificity">
    <text>Expressed in lung, small intestine and spleen.</text>
</comment>
<comment type="miscellaneous">
    <text>Lysozyme C is capable of both hydrolysis and transglycosylation; it also shows a slight esterase activity. It acts rapidly on both peptide-substituted and unsubstituted peptidoglycan, and slowly on chitin oligosaccharides.</text>
</comment>
<comment type="miscellaneous">
    <text>Rat has two lysozymes, type 1 and type 2 of which only type 1 is expressed; type 2 being probably a pseudogene.</text>
</comment>
<comment type="similarity">
    <text evidence="1">Belongs to the glycosyl hydrolase 22 family.</text>
</comment>
<keyword id="KW-0929">Antimicrobial</keyword>
<keyword id="KW-0081">Bacteriolytic enzyme</keyword>
<keyword id="KW-0903">Direct protein sequencing</keyword>
<keyword id="KW-1015">Disulfide bond</keyword>
<keyword id="KW-0326">Glycosidase</keyword>
<keyword id="KW-0378">Hydrolase</keyword>
<keyword id="KW-0494">Milk protein</keyword>
<keyword id="KW-1185">Reference proteome</keyword>
<keyword id="KW-0964">Secreted</keyword>
<keyword id="KW-0732">Signal</keyword>
<evidence type="ECO:0000255" key="1">
    <source>
        <dbReference type="PROSITE-ProRule" id="PRU00680"/>
    </source>
</evidence>
<evidence type="ECO:0000269" key="2">
    <source>
    </source>
</evidence>
<evidence type="ECO:0000305" key="3"/>
<proteinExistence type="evidence at protein level"/>
<reference key="1">
    <citation type="journal article" date="1993" name="Mol. Phylogenet. Evol.">
        <title>Evolution of rodent lysozymes: isolation and sequence of the rat lysozyme genes.</title>
        <authorList>
            <person name="Yeh T.C."/>
            <person name="Wilson A.C."/>
            <person name="Irwin D.M."/>
        </authorList>
    </citation>
    <scope>NUCLEOTIDE SEQUENCE [GENOMIC DNA]</scope>
    <source>
        <strain>Sprague-Dawley</strain>
    </source>
</reference>
<reference key="2">
    <citation type="journal article" date="1977" name="Biochemistry">
        <title>Primary structure of rat lysozyme.</title>
        <authorList>
            <person name="White T.J."/>
            <person name="Mross G.A."/>
            <person name="Osserman E.F."/>
            <person name="Wilson A.C."/>
        </authorList>
    </citation>
    <scope>PROTEIN SEQUENCE OF 19-148</scope>
    <source>
        <strain>Wistar</strain>
    </source>
</reference>
<name>LYSC1_RAT</name>
<accession>P00697</accession>
<protein>
    <recommendedName>
        <fullName>Lysozyme C-1</fullName>
        <ecNumber>3.2.1.17</ecNumber>
    </recommendedName>
    <alternativeName>
        <fullName>1,4-beta-N-acetylmuramidase C</fullName>
    </alternativeName>
</protein>
<organism>
    <name type="scientific">Rattus norvegicus</name>
    <name type="common">Rat</name>
    <dbReference type="NCBI Taxonomy" id="10116"/>
    <lineage>
        <taxon>Eukaryota</taxon>
        <taxon>Metazoa</taxon>
        <taxon>Chordata</taxon>
        <taxon>Craniata</taxon>
        <taxon>Vertebrata</taxon>
        <taxon>Euteleostomi</taxon>
        <taxon>Mammalia</taxon>
        <taxon>Eutheria</taxon>
        <taxon>Euarchontoglires</taxon>
        <taxon>Glires</taxon>
        <taxon>Rodentia</taxon>
        <taxon>Myomorpha</taxon>
        <taxon>Muroidea</taxon>
        <taxon>Muridae</taxon>
        <taxon>Murinae</taxon>
        <taxon>Rattus</taxon>
    </lineage>
</organism>
<sequence>MKALLVLGFLLLSASVQAKIYERCQFARTLKRNGMSGYYGVSLADWVCLAQHESNYNTQARNYNPGDQSTDYGIFQINSRYWCNDGKTPRAKNACGIPCSALLQDDITQAIQCAKRVVRDPQGIRAWVAWQRHCKNRDLSGYIRNCGV</sequence>
<feature type="signal peptide" evidence="2">
    <location>
        <begin position="1"/>
        <end position="18"/>
    </location>
</feature>
<feature type="chain" id="PRO_0000018484" description="Lysozyme C-1">
    <location>
        <begin position="19"/>
        <end position="148"/>
    </location>
</feature>
<feature type="domain" description="C-type lysozyme" evidence="1">
    <location>
        <begin position="19"/>
        <end position="148"/>
    </location>
</feature>
<feature type="active site" evidence="1">
    <location>
        <position position="53"/>
    </location>
</feature>
<feature type="active site" evidence="1">
    <location>
        <position position="71"/>
    </location>
</feature>
<feature type="disulfide bond" evidence="1">
    <location>
        <begin position="24"/>
        <end position="146"/>
    </location>
</feature>
<feature type="disulfide bond" evidence="1">
    <location>
        <begin position="48"/>
        <end position="134"/>
    </location>
</feature>
<feature type="disulfide bond" evidence="1">
    <location>
        <begin position="83"/>
        <end position="99"/>
    </location>
</feature>
<feature type="disulfide bond" evidence="1">
    <location>
        <begin position="95"/>
        <end position="113"/>
    </location>
</feature>
<feature type="sequence conflict" description="In Ref. 2; AA sequence." evidence="3" ref="2">
    <original>I</original>
    <variation>T</variation>
    <location>
        <position position="20"/>
    </location>
</feature>
<feature type="sequence conflict" description="In Ref. 2; AA sequence." evidence="3" ref="2">
    <original>N</original>
    <variation>D</variation>
    <location>
        <position position="64"/>
    </location>
</feature>